<comment type="function">
    <text evidence="1">Catalyzes the NADPH-dependent reduction of glutamyl-tRNA(Glu) to glutamate 1-semialdehyde (GSA).</text>
</comment>
<comment type="catalytic activity">
    <reaction evidence="1">
        <text>(S)-4-amino-5-oxopentanoate + tRNA(Glu) + NADP(+) = L-glutamyl-tRNA(Glu) + NADPH + H(+)</text>
        <dbReference type="Rhea" id="RHEA:12344"/>
        <dbReference type="Rhea" id="RHEA-COMP:9663"/>
        <dbReference type="Rhea" id="RHEA-COMP:9680"/>
        <dbReference type="ChEBI" id="CHEBI:15378"/>
        <dbReference type="ChEBI" id="CHEBI:57501"/>
        <dbReference type="ChEBI" id="CHEBI:57783"/>
        <dbReference type="ChEBI" id="CHEBI:58349"/>
        <dbReference type="ChEBI" id="CHEBI:78442"/>
        <dbReference type="ChEBI" id="CHEBI:78520"/>
        <dbReference type="EC" id="1.2.1.70"/>
    </reaction>
</comment>
<comment type="pathway">
    <text evidence="1">Porphyrin-containing compound metabolism; protoporphyrin-IX biosynthesis; 5-aminolevulinate from L-glutamyl-tRNA(Glu): step 1/2.</text>
</comment>
<comment type="subunit">
    <text evidence="1">Homodimer.</text>
</comment>
<comment type="domain">
    <text evidence="1">Possesses an unusual extended V-shaped dimeric structure with each monomer consisting of three distinct domains arranged along a curved 'spinal' alpha-helix. The N-terminal catalytic domain specifically recognizes the glutamate moiety of the substrate. The second domain is the NADPH-binding domain, and the third C-terminal domain is responsible for dimerization.</text>
</comment>
<comment type="miscellaneous">
    <text evidence="1">During catalysis, the active site Cys acts as a nucleophile attacking the alpha-carbonyl group of tRNA-bound glutamate with the formation of a thioester intermediate between enzyme and glutamate, and the concomitant release of tRNA(Glu). The thioester intermediate is finally reduced by direct hydride transfer from NADPH, to form the product GSA.</text>
</comment>
<comment type="similarity">
    <text evidence="1">Belongs to the glutamyl-tRNA reductase family.</text>
</comment>
<comment type="sequence caution" evidence="2">
    <conflict type="erroneous initiation">
        <sequence resource="EMBL-CDS" id="ABC76451"/>
    </conflict>
</comment>
<reference key="1">
    <citation type="journal article" date="2007" name="Proc. Natl. Acad. Sci. U.S.A.">
        <title>The genome of Syntrophus aciditrophicus: life at the thermodynamic limit of microbial growth.</title>
        <authorList>
            <person name="McInerney M.J."/>
            <person name="Rohlin L."/>
            <person name="Mouttaki H."/>
            <person name="Kim U."/>
            <person name="Krupp R.S."/>
            <person name="Rios-Hernandez L."/>
            <person name="Sieber J."/>
            <person name="Struchtemeyer C.G."/>
            <person name="Bhattacharyya A."/>
            <person name="Campbell J.W."/>
            <person name="Gunsalus R.P."/>
        </authorList>
    </citation>
    <scope>NUCLEOTIDE SEQUENCE [LARGE SCALE GENOMIC DNA]</scope>
    <source>
        <strain>SB</strain>
    </source>
</reference>
<keyword id="KW-0521">NADP</keyword>
<keyword id="KW-0560">Oxidoreductase</keyword>
<keyword id="KW-0627">Porphyrin biosynthesis</keyword>
<keyword id="KW-1185">Reference proteome</keyword>
<organism>
    <name type="scientific">Syntrophus aciditrophicus (strain SB)</name>
    <dbReference type="NCBI Taxonomy" id="56780"/>
    <lineage>
        <taxon>Bacteria</taxon>
        <taxon>Pseudomonadati</taxon>
        <taxon>Thermodesulfobacteriota</taxon>
        <taxon>Syntrophia</taxon>
        <taxon>Syntrophales</taxon>
        <taxon>Syntrophaceae</taxon>
        <taxon>Syntrophus</taxon>
    </lineage>
</organism>
<feature type="chain" id="PRO_0000335076" description="Glutamyl-tRNA reductase">
    <location>
        <begin position="1"/>
        <end position="423"/>
    </location>
</feature>
<feature type="active site" description="Nucleophile" evidence="1">
    <location>
        <position position="50"/>
    </location>
</feature>
<feature type="binding site" evidence="1">
    <location>
        <begin position="49"/>
        <end position="52"/>
    </location>
    <ligand>
        <name>substrate</name>
    </ligand>
</feature>
<feature type="binding site" evidence="1">
    <location>
        <position position="111"/>
    </location>
    <ligand>
        <name>substrate</name>
    </ligand>
</feature>
<feature type="binding site" evidence="1">
    <location>
        <begin position="116"/>
        <end position="118"/>
    </location>
    <ligand>
        <name>substrate</name>
    </ligand>
</feature>
<feature type="binding site" evidence="1">
    <location>
        <position position="122"/>
    </location>
    <ligand>
        <name>substrate</name>
    </ligand>
</feature>
<feature type="binding site" evidence="1">
    <location>
        <begin position="191"/>
        <end position="196"/>
    </location>
    <ligand>
        <name>NADP(+)</name>
        <dbReference type="ChEBI" id="CHEBI:58349"/>
    </ligand>
</feature>
<feature type="site" description="Important for activity" evidence="1">
    <location>
        <position position="101"/>
    </location>
</feature>
<evidence type="ECO:0000255" key="1">
    <source>
        <dbReference type="HAMAP-Rule" id="MF_00087"/>
    </source>
</evidence>
<evidence type="ECO:0000305" key="2"/>
<accession>Q2LQU3</accession>
<protein>
    <recommendedName>
        <fullName evidence="1">Glutamyl-tRNA reductase</fullName>
        <shortName evidence="1">GluTR</shortName>
        <ecNumber evidence="1">1.2.1.70</ecNumber>
    </recommendedName>
</protein>
<name>HEM1_SYNAS</name>
<proteinExistence type="inferred from homology"/>
<sequence length="423" mass="47114">MGILLIGMSHKTSPLAVRERFSLSCENRDHPLDRIRQMPSIREALYLATCNRVEVLVSAAEEAEQAVEEGLKALMAERGGISGQELERCLYTLSGAEAVRHLFRVASSLDSLVMGEPQILGQVKEAYREAVEHGVTGILLNRILHHAFQVAKRVRTETGIADNAVSVGYAAVELAKKIFGRLDGKVILLVGAGEMSELAARHLLKQGIKSIFVANRTHARALEMAEQFEGKAVVLEQVPEVLKSVDIVISSTGASNYVLTRDMVAAALRRRKNRFLFLIDIAVPRDIEPAAGDIDNVYLYNIDHLQELVDENRNHRLREAEKAEAIIEEEVGNHTAWLSTLDVVPTIVEFREKIEGIMKAELGKSASWRHSLSEIDQRHVESLMASIVNKILHEPTACLREQSRNRNGKAYAAALRKLFKLER</sequence>
<dbReference type="EC" id="1.2.1.70" evidence="1"/>
<dbReference type="EMBL" id="CP000252">
    <property type="protein sequence ID" value="ABC76451.1"/>
    <property type="status" value="ALT_INIT"/>
    <property type="molecule type" value="Genomic_DNA"/>
</dbReference>
<dbReference type="RefSeq" id="WP_049749877.1">
    <property type="nucleotide sequence ID" value="NC_007759.1"/>
</dbReference>
<dbReference type="SMR" id="Q2LQU3"/>
<dbReference type="FunCoup" id="Q2LQU3">
    <property type="interactions" value="330"/>
</dbReference>
<dbReference type="STRING" id="56780.SYN_02274"/>
<dbReference type="KEGG" id="sat:SYN_02274"/>
<dbReference type="eggNOG" id="COG0373">
    <property type="taxonomic scope" value="Bacteria"/>
</dbReference>
<dbReference type="HOGENOM" id="CLU_035113_2_2_7"/>
<dbReference type="InParanoid" id="Q2LQU3"/>
<dbReference type="OrthoDB" id="110209at2"/>
<dbReference type="UniPathway" id="UPA00251">
    <property type="reaction ID" value="UER00316"/>
</dbReference>
<dbReference type="Proteomes" id="UP000001933">
    <property type="component" value="Chromosome"/>
</dbReference>
<dbReference type="GO" id="GO:0008883">
    <property type="term" value="F:glutamyl-tRNA reductase activity"/>
    <property type="evidence" value="ECO:0007669"/>
    <property type="project" value="UniProtKB-UniRule"/>
</dbReference>
<dbReference type="GO" id="GO:0050661">
    <property type="term" value="F:NADP binding"/>
    <property type="evidence" value="ECO:0007669"/>
    <property type="project" value="InterPro"/>
</dbReference>
<dbReference type="GO" id="GO:0019353">
    <property type="term" value="P:protoporphyrinogen IX biosynthetic process from glutamate"/>
    <property type="evidence" value="ECO:0007669"/>
    <property type="project" value="TreeGrafter"/>
</dbReference>
<dbReference type="CDD" id="cd05213">
    <property type="entry name" value="NAD_bind_Glutamyl_tRNA_reduct"/>
    <property type="match status" value="1"/>
</dbReference>
<dbReference type="FunFam" id="3.30.460.30:FF:000001">
    <property type="entry name" value="Glutamyl-tRNA reductase"/>
    <property type="match status" value="1"/>
</dbReference>
<dbReference type="FunFam" id="3.40.50.720:FF:000031">
    <property type="entry name" value="Glutamyl-tRNA reductase"/>
    <property type="match status" value="1"/>
</dbReference>
<dbReference type="Gene3D" id="3.30.460.30">
    <property type="entry name" value="Glutamyl-tRNA reductase, N-terminal domain"/>
    <property type="match status" value="1"/>
</dbReference>
<dbReference type="Gene3D" id="3.40.50.720">
    <property type="entry name" value="NAD(P)-binding Rossmann-like Domain"/>
    <property type="match status" value="1"/>
</dbReference>
<dbReference type="HAMAP" id="MF_00087">
    <property type="entry name" value="Glu_tRNA_reductase"/>
    <property type="match status" value="1"/>
</dbReference>
<dbReference type="InterPro" id="IPR000343">
    <property type="entry name" value="4pyrrol_synth_GluRdtase"/>
</dbReference>
<dbReference type="InterPro" id="IPR015896">
    <property type="entry name" value="4pyrrol_synth_GluRdtase_dimer"/>
</dbReference>
<dbReference type="InterPro" id="IPR015895">
    <property type="entry name" value="4pyrrol_synth_GluRdtase_N"/>
</dbReference>
<dbReference type="InterPro" id="IPR018214">
    <property type="entry name" value="GluRdtase_CS"/>
</dbReference>
<dbReference type="InterPro" id="IPR036453">
    <property type="entry name" value="GluRdtase_dimer_dom_sf"/>
</dbReference>
<dbReference type="InterPro" id="IPR036343">
    <property type="entry name" value="GluRdtase_N_sf"/>
</dbReference>
<dbReference type="InterPro" id="IPR036291">
    <property type="entry name" value="NAD(P)-bd_dom_sf"/>
</dbReference>
<dbReference type="InterPro" id="IPR006151">
    <property type="entry name" value="Shikm_DH/Glu-tRNA_Rdtase"/>
</dbReference>
<dbReference type="NCBIfam" id="TIGR01035">
    <property type="entry name" value="hemA"/>
    <property type="match status" value="1"/>
</dbReference>
<dbReference type="PANTHER" id="PTHR43013">
    <property type="entry name" value="GLUTAMYL-TRNA REDUCTASE"/>
    <property type="match status" value="1"/>
</dbReference>
<dbReference type="PANTHER" id="PTHR43013:SF1">
    <property type="entry name" value="GLUTAMYL-TRNA REDUCTASE"/>
    <property type="match status" value="1"/>
</dbReference>
<dbReference type="Pfam" id="PF00745">
    <property type="entry name" value="GlutR_dimer"/>
    <property type="match status" value="1"/>
</dbReference>
<dbReference type="Pfam" id="PF05201">
    <property type="entry name" value="GlutR_N"/>
    <property type="match status" value="1"/>
</dbReference>
<dbReference type="Pfam" id="PF01488">
    <property type="entry name" value="Shikimate_DH"/>
    <property type="match status" value="1"/>
</dbReference>
<dbReference type="PIRSF" id="PIRSF000445">
    <property type="entry name" value="4pyrrol_synth_GluRdtase"/>
    <property type="match status" value="1"/>
</dbReference>
<dbReference type="SUPFAM" id="SSF69742">
    <property type="entry name" value="Glutamyl tRNA-reductase catalytic, N-terminal domain"/>
    <property type="match status" value="1"/>
</dbReference>
<dbReference type="SUPFAM" id="SSF69075">
    <property type="entry name" value="Glutamyl tRNA-reductase dimerization domain"/>
    <property type="match status" value="1"/>
</dbReference>
<dbReference type="SUPFAM" id="SSF51735">
    <property type="entry name" value="NAD(P)-binding Rossmann-fold domains"/>
    <property type="match status" value="1"/>
</dbReference>
<dbReference type="PROSITE" id="PS00747">
    <property type="entry name" value="GLUTR"/>
    <property type="match status" value="1"/>
</dbReference>
<gene>
    <name evidence="1" type="primary">hemA</name>
    <name type="ordered locus">SYNAS_05720</name>
    <name type="ORF">SYN_02274</name>
</gene>